<keyword id="KW-0227">DNA damage</keyword>
<keyword id="KW-0234">DNA repair</keyword>
<keyword id="KW-1185">Reference proteome</keyword>
<protein>
    <recommendedName>
        <fullName>DNA mismatch repair protein pms1</fullName>
    </recommendedName>
</protein>
<name>PMS1_SCHPO</name>
<organism>
    <name type="scientific">Schizosaccharomyces pombe (strain 972 / ATCC 24843)</name>
    <name type="common">Fission yeast</name>
    <dbReference type="NCBI Taxonomy" id="284812"/>
    <lineage>
        <taxon>Eukaryota</taxon>
        <taxon>Fungi</taxon>
        <taxon>Dikarya</taxon>
        <taxon>Ascomycota</taxon>
        <taxon>Taphrinomycotina</taxon>
        <taxon>Schizosaccharomycetes</taxon>
        <taxon>Schizosaccharomycetales</taxon>
        <taxon>Schizosaccharomycetaceae</taxon>
        <taxon>Schizosaccharomyces</taxon>
    </lineage>
</organism>
<feature type="chain" id="PRO_0000178010" description="DNA mismatch repair protein pms1">
    <location>
        <begin position="1"/>
        <end position="794"/>
    </location>
</feature>
<feature type="region of interest" description="Disordered" evidence="1">
    <location>
        <begin position="351"/>
        <end position="384"/>
    </location>
</feature>
<feature type="region of interest" description="Disordered" evidence="1">
    <location>
        <begin position="409"/>
        <end position="442"/>
    </location>
</feature>
<feature type="compositionally biased region" description="Polar residues" evidence="1">
    <location>
        <begin position="352"/>
        <end position="371"/>
    </location>
</feature>
<feature type="compositionally biased region" description="Basic and acidic residues" evidence="1">
    <location>
        <begin position="419"/>
        <end position="429"/>
    </location>
</feature>
<feature type="compositionally biased region" description="Polar residues" evidence="1">
    <location>
        <begin position="430"/>
        <end position="442"/>
    </location>
</feature>
<proteinExistence type="inferred from homology"/>
<comment type="function">
    <text>This protein is involved in the repair of mismatches in DNA.</text>
</comment>
<comment type="similarity">
    <text evidence="2">Belongs to the DNA mismatch repair MutL/HexB family.</text>
</comment>
<accession>P54280</accession>
<sequence>MSTVKPIDANTVHKICSGQVITDVASAVKELVENSLDSGATTIEIRFKNYGINSIEVVDNGSGIDAGDYESIGKKHFTSKITDFEDLEALQTFGFRGEALSSLCAVGQVIISTATQNEAPKGVQLNLDHEGSLKDKLTIPFQRGTSVMVNDLFCTLPVRRKLLEKNYKREFSKAISLLQAYATISTNKRFMVYHQTKNSGKLLQLSTNSNKDMKLNIMNVFGTKVSSSLIPWNDGIIEGYISRPHVGSTRASNERQMLFINRRLVNLPKIARVIQEVFKPYSMAQSPFFAINLRITNGTIDINVSPDKKSVFLSEEDSIIEFIKNSLQNLCESCGHAISCSRSQSIFSYSSQIPDSSGDSTDQELPQSIPATESETSDDSSFSYKRSPCKRKLVEATAQPAISTSVAEGASLAQVSKPLPERLQKDSMRRSSPLNEKVTASSERMKKKLALFASSTDTSMQKTIDSSFPLKQPINKPSSNPNNLLLNDPSPASTPVAKTINLNEIESVHNAESVSTLSSIPRTEQTSVANRIPSKTAALQKLKFFQSRPLDGLNKFSKKINISLSGVQKDIVRSDALLKFSNKIGVVHDISDENQEDHLNLTVHKADFLRMRVVGQFNRGFIVVVHGNNLFIIDQHASDEKFNYEHLKSNLVINSQDLVLPKRLDLAATEETVLIDHIDLIRRKGFGVAIDLNQRVGNRCTLLSVPTSKNVIFDTSDLLEIISVLSEHPQIDPFSSRLERMLASKACRSSVMIGRALTISEMNTIVRHLAELSKPWNCPHGRPTMRHLLRLKDI</sequence>
<gene>
    <name type="primary">pms1</name>
    <name type="ORF">SPAC19G12.02c</name>
</gene>
<reference key="1">
    <citation type="journal article" date="1997" name="Genetics">
        <title>Mismatch repair in Schizosaccharomyces pombe requires the mutL homologous gene pms1: molecular cloning and functional analysis.</title>
        <authorList>
            <person name="Schar P."/>
            <person name="Baur M."/>
            <person name="Schneider C."/>
            <person name="Kohli J."/>
        </authorList>
    </citation>
    <scope>NUCLEOTIDE SEQUENCE [GENOMIC DNA]</scope>
    <source>
        <strain>972 / ATCC 24843</strain>
    </source>
</reference>
<reference key="2">
    <citation type="journal article" date="2002" name="Nature">
        <title>The genome sequence of Schizosaccharomyces pombe.</title>
        <authorList>
            <person name="Wood V."/>
            <person name="Gwilliam R."/>
            <person name="Rajandream M.A."/>
            <person name="Lyne M.H."/>
            <person name="Lyne R."/>
            <person name="Stewart A."/>
            <person name="Sgouros J.G."/>
            <person name="Peat N."/>
            <person name="Hayles J."/>
            <person name="Baker S.G."/>
            <person name="Basham D."/>
            <person name="Bowman S."/>
            <person name="Brooks K."/>
            <person name="Brown D."/>
            <person name="Brown S."/>
            <person name="Chillingworth T."/>
            <person name="Churcher C.M."/>
            <person name="Collins M."/>
            <person name="Connor R."/>
            <person name="Cronin A."/>
            <person name="Davis P."/>
            <person name="Feltwell T."/>
            <person name="Fraser A."/>
            <person name="Gentles S."/>
            <person name="Goble A."/>
            <person name="Hamlin N."/>
            <person name="Harris D.E."/>
            <person name="Hidalgo J."/>
            <person name="Hodgson G."/>
            <person name="Holroyd S."/>
            <person name="Hornsby T."/>
            <person name="Howarth S."/>
            <person name="Huckle E.J."/>
            <person name="Hunt S."/>
            <person name="Jagels K."/>
            <person name="James K.D."/>
            <person name="Jones L."/>
            <person name="Jones M."/>
            <person name="Leather S."/>
            <person name="McDonald S."/>
            <person name="McLean J."/>
            <person name="Mooney P."/>
            <person name="Moule S."/>
            <person name="Mungall K.L."/>
            <person name="Murphy L.D."/>
            <person name="Niblett D."/>
            <person name="Odell C."/>
            <person name="Oliver K."/>
            <person name="O'Neil S."/>
            <person name="Pearson D."/>
            <person name="Quail M.A."/>
            <person name="Rabbinowitsch E."/>
            <person name="Rutherford K.M."/>
            <person name="Rutter S."/>
            <person name="Saunders D."/>
            <person name="Seeger K."/>
            <person name="Sharp S."/>
            <person name="Skelton J."/>
            <person name="Simmonds M.N."/>
            <person name="Squares R."/>
            <person name="Squares S."/>
            <person name="Stevens K."/>
            <person name="Taylor K."/>
            <person name="Taylor R.G."/>
            <person name="Tivey A."/>
            <person name="Walsh S.V."/>
            <person name="Warren T."/>
            <person name="Whitehead S."/>
            <person name="Woodward J.R."/>
            <person name="Volckaert G."/>
            <person name="Aert R."/>
            <person name="Robben J."/>
            <person name="Grymonprez B."/>
            <person name="Weltjens I."/>
            <person name="Vanstreels E."/>
            <person name="Rieger M."/>
            <person name="Schaefer M."/>
            <person name="Mueller-Auer S."/>
            <person name="Gabel C."/>
            <person name="Fuchs M."/>
            <person name="Duesterhoeft A."/>
            <person name="Fritzc C."/>
            <person name="Holzer E."/>
            <person name="Moestl D."/>
            <person name="Hilbert H."/>
            <person name="Borzym K."/>
            <person name="Langer I."/>
            <person name="Beck A."/>
            <person name="Lehrach H."/>
            <person name="Reinhardt R."/>
            <person name="Pohl T.M."/>
            <person name="Eger P."/>
            <person name="Zimmermann W."/>
            <person name="Wedler H."/>
            <person name="Wambutt R."/>
            <person name="Purnelle B."/>
            <person name="Goffeau A."/>
            <person name="Cadieu E."/>
            <person name="Dreano S."/>
            <person name="Gloux S."/>
            <person name="Lelaure V."/>
            <person name="Mottier S."/>
            <person name="Galibert F."/>
            <person name="Aves S.J."/>
            <person name="Xiang Z."/>
            <person name="Hunt C."/>
            <person name="Moore K."/>
            <person name="Hurst S.M."/>
            <person name="Lucas M."/>
            <person name="Rochet M."/>
            <person name="Gaillardin C."/>
            <person name="Tallada V.A."/>
            <person name="Garzon A."/>
            <person name="Thode G."/>
            <person name="Daga R.R."/>
            <person name="Cruzado L."/>
            <person name="Jimenez J."/>
            <person name="Sanchez M."/>
            <person name="del Rey F."/>
            <person name="Benito J."/>
            <person name="Dominguez A."/>
            <person name="Revuelta J.L."/>
            <person name="Moreno S."/>
            <person name="Armstrong J."/>
            <person name="Forsburg S.L."/>
            <person name="Cerutti L."/>
            <person name="Lowe T."/>
            <person name="McCombie W.R."/>
            <person name="Paulsen I."/>
            <person name="Potashkin J."/>
            <person name="Shpakovski G.V."/>
            <person name="Ussery D."/>
            <person name="Barrell B.G."/>
            <person name="Nurse P."/>
        </authorList>
    </citation>
    <scope>NUCLEOTIDE SEQUENCE [LARGE SCALE GENOMIC DNA]</scope>
    <source>
        <strain>972 / ATCC 24843</strain>
    </source>
</reference>
<evidence type="ECO:0000256" key="1">
    <source>
        <dbReference type="SAM" id="MobiDB-lite"/>
    </source>
</evidence>
<evidence type="ECO:0000305" key="2"/>
<dbReference type="EMBL" id="X96581">
    <property type="protein sequence ID" value="CAA65400.1"/>
    <property type="molecule type" value="Genomic_DNA"/>
</dbReference>
<dbReference type="EMBL" id="CU329670">
    <property type="protein sequence ID" value="CAB10113.1"/>
    <property type="molecule type" value="Genomic_DNA"/>
</dbReference>
<dbReference type="PIR" id="T37989">
    <property type="entry name" value="T37989"/>
</dbReference>
<dbReference type="RefSeq" id="NP_594417.1">
    <property type="nucleotide sequence ID" value="NM_001019846.2"/>
</dbReference>
<dbReference type="SMR" id="P54280"/>
<dbReference type="BioGRID" id="279037">
    <property type="interactions" value="18"/>
</dbReference>
<dbReference type="FunCoup" id="P54280">
    <property type="interactions" value="442"/>
</dbReference>
<dbReference type="STRING" id="284812.P54280"/>
<dbReference type="iPTMnet" id="P54280"/>
<dbReference type="PaxDb" id="4896-SPAC19G12.02c.1"/>
<dbReference type="EnsemblFungi" id="SPAC19G12.02c.1">
    <property type="protein sequence ID" value="SPAC19G12.02c.1:pep"/>
    <property type="gene ID" value="SPAC19G12.02c"/>
</dbReference>
<dbReference type="PomBase" id="SPAC19G12.02c">
    <property type="gene designation" value="pms1"/>
</dbReference>
<dbReference type="VEuPathDB" id="FungiDB:SPAC19G12.02c"/>
<dbReference type="eggNOG" id="KOG1978">
    <property type="taxonomic scope" value="Eukaryota"/>
</dbReference>
<dbReference type="HOGENOM" id="CLU_004131_0_2_1"/>
<dbReference type="InParanoid" id="P54280"/>
<dbReference type="OMA" id="SFNNVQY"/>
<dbReference type="PhylomeDB" id="P54280"/>
<dbReference type="Reactome" id="R-SPO-5358565">
    <property type="pathway name" value="Mismatch repair (MMR) directed by MSH2:MSH6 (MutSalpha)"/>
</dbReference>
<dbReference type="PRO" id="PR:P54280"/>
<dbReference type="Proteomes" id="UP000002485">
    <property type="component" value="Chromosome I"/>
</dbReference>
<dbReference type="GO" id="GO:0032389">
    <property type="term" value="C:MutLalpha complex"/>
    <property type="evidence" value="ECO:0000318"/>
    <property type="project" value="GO_Central"/>
</dbReference>
<dbReference type="GO" id="GO:0000228">
    <property type="term" value="C:nuclear chromosome"/>
    <property type="evidence" value="ECO:0000266"/>
    <property type="project" value="PomBase"/>
</dbReference>
<dbReference type="GO" id="GO:0005634">
    <property type="term" value="C:nucleus"/>
    <property type="evidence" value="ECO:0007005"/>
    <property type="project" value="PomBase"/>
</dbReference>
<dbReference type="GO" id="GO:0005524">
    <property type="term" value="F:ATP binding"/>
    <property type="evidence" value="ECO:0000266"/>
    <property type="project" value="PomBase"/>
</dbReference>
<dbReference type="GO" id="GO:0016887">
    <property type="term" value="F:ATP hydrolysis activity"/>
    <property type="evidence" value="ECO:0000318"/>
    <property type="project" value="GO_Central"/>
</dbReference>
<dbReference type="GO" id="GO:0140664">
    <property type="term" value="F:ATP-dependent DNA damage sensor activity"/>
    <property type="evidence" value="ECO:0007669"/>
    <property type="project" value="InterPro"/>
</dbReference>
<dbReference type="GO" id="GO:0030983">
    <property type="term" value="F:mismatched DNA binding"/>
    <property type="evidence" value="ECO:0000303"/>
    <property type="project" value="PomBase"/>
</dbReference>
<dbReference type="GO" id="GO:0043570">
    <property type="term" value="P:maintenance of DNA repeat elements"/>
    <property type="evidence" value="ECO:0000315"/>
    <property type="project" value="PomBase"/>
</dbReference>
<dbReference type="GO" id="GO:0000710">
    <property type="term" value="P:meiotic mismatch repair"/>
    <property type="evidence" value="ECO:0000315"/>
    <property type="project" value="PomBase"/>
</dbReference>
<dbReference type="GO" id="GO:0006298">
    <property type="term" value="P:mismatch repair"/>
    <property type="evidence" value="ECO:0000316"/>
    <property type="project" value="PomBase"/>
</dbReference>
<dbReference type="CDD" id="cd16926">
    <property type="entry name" value="HATPase_MutL-MLH-PMS-like"/>
    <property type="match status" value="1"/>
</dbReference>
<dbReference type="CDD" id="cd03484">
    <property type="entry name" value="MutL_Trans_hPMS_2_like"/>
    <property type="match status" value="1"/>
</dbReference>
<dbReference type="FunFam" id="3.30.1370.100:FF:000001">
    <property type="entry name" value="Mismatch repair endonuclease pms1, putative"/>
    <property type="match status" value="1"/>
</dbReference>
<dbReference type="FunFam" id="3.30.565.10:FF:000014">
    <property type="entry name" value="Mismatch repair endonuclease pms1, putative"/>
    <property type="match status" value="1"/>
</dbReference>
<dbReference type="Gene3D" id="3.30.230.10">
    <property type="match status" value="1"/>
</dbReference>
<dbReference type="Gene3D" id="3.30.565.10">
    <property type="entry name" value="Histidine kinase-like ATPase, C-terminal domain"/>
    <property type="match status" value="1"/>
</dbReference>
<dbReference type="Gene3D" id="3.30.1540.20">
    <property type="entry name" value="MutL, C-terminal domain, dimerisation subdomain"/>
    <property type="match status" value="1"/>
</dbReference>
<dbReference type="Gene3D" id="3.30.1370.100">
    <property type="entry name" value="MutL, C-terminal domain, regulatory subdomain"/>
    <property type="match status" value="1"/>
</dbReference>
<dbReference type="InterPro" id="IPR014762">
    <property type="entry name" value="DNA_mismatch_repair_CS"/>
</dbReference>
<dbReference type="InterPro" id="IPR013507">
    <property type="entry name" value="DNA_mismatch_S5_2-like"/>
</dbReference>
<dbReference type="InterPro" id="IPR036890">
    <property type="entry name" value="HATPase_C_sf"/>
</dbReference>
<dbReference type="InterPro" id="IPR002099">
    <property type="entry name" value="MutL/Mlh/PMS"/>
</dbReference>
<dbReference type="InterPro" id="IPR038973">
    <property type="entry name" value="MutL/Mlh/Pms-like"/>
</dbReference>
<dbReference type="InterPro" id="IPR014790">
    <property type="entry name" value="MutL_C"/>
</dbReference>
<dbReference type="InterPro" id="IPR042120">
    <property type="entry name" value="MutL_C_dimsub"/>
</dbReference>
<dbReference type="InterPro" id="IPR042121">
    <property type="entry name" value="MutL_C_regsub"/>
</dbReference>
<dbReference type="InterPro" id="IPR037198">
    <property type="entry name" value="MutL_C_sf"/>
</dbReference>
<dbReference type="InterPro" id="IPR020568">
    <property type="entry name" value="Ribosomal_Su5_D2-typ_SF"/>
</dbReference>
<dbReference type="InterPro" id="IPR014721">
    <property type="entry name" value="Ribsml_uS5_D2-typ_fold_subgr"/>
</dbReference>
<dbReference type="NCBIfam" id="TIGR00585">
    <property type="entry name" value="mutl"/>
    <property type="match status" value="1"/>
</dbReference>
<dbReference type="PANTHER" id="PTHR10073">
    <property type="entry name" value="DNA MISMATCH REPAIR PROTEIN MLH, PMS, MUTL"/>
    <property type="match status" value="1"/>
</dbReference>
<dbReference type="PANTHER" id="PTHR10073:SF52">
    <property type="entry name" value="MISMATCH REPAIR ENDONUCLEASE PMS2"/>
    <property type="match status" value="1"/>
</dbReference>
<dbReference type="Pfam" id="PF01119">
    <property type="entry name" value="DNA_mis_repair"/>
    <property type="match status" value="1"/>
</dbReference>
<dbReference type="Pfam" id="PF13589">
    <property type="entry name" value="HATPase_c_3"/>
    <property type="match status" value="1"/>
</dbReference>
<dbReference type="Pfam" id="PF08676">
    <property type="entry name" value="MutL_C"/>
    <property type="match status" value="1"/>
</dbReference>
<dbReference type="SMART" id="SM01340">
    <property type="entry name" value="DNA_mis_repair"/>
    <property type="match status" value="1"/>
</dbReference>
<dbReference type="SMART" id="SM00853">
    <property type="entry name" value="MutL_C"/>
    <property type="match status" value="1"/>
</dbReference>
<dbReference type="SUPFAM" id="SSF55874">
    <property type="entry name" value="ATPase domain of HSP90 chaperone/DNA topoisomerase II/histidine kinase"/>
    <property type="match status" value="1"/>
</dbReference>
<dbReference type="SUPFAM" id="SSF118116">
    <property type="entry name" value="DNA mismatch repair protein MutL"/>
    <property type="match status" value="1"/>
</dbReference>
<dbReference type="SUPFAM" id="SSF54211">
    <property type="entry name" value="Ribosomal protein S5 domain 2-like"/>
    <property type="match status" value="1"/>
</dbReference>
<dbReference type="PROSITE" id="PS00058">
    <property type="entry name" value="DNA_MISMATCH_REPAIR_1"/>
    <property type="match status" value="1"/>
</dbReference>